<comment type="function">
    <text evidence="1">Participates in a DNA-damage check-point that is active prior to asymmetric division when DNA is damaged. DisA forms globular foci that rapidly scan along the chromosomes during sporulation, searching for lesions. When a lesion is present, DisA pauses at the lesion site. This triggers a cellular response that culminates in a temporary block in sporulation initiation.</text>
</comment>
<comment type="function">
    <text evidence="1">Also has diadenylate cyclase activity, catalyzing the condensation of 2 ATP molecules into cyclic di-AMP (c-di-AMP). c-di-AMP acts as a signaling molecule that couples DNA integrity with progression of sporulation. The rise in c-di-AMP level generated by DisA while scanning the chromosome, operates as a positive signal that advances sporulation; upon encountering a lesion, the DisA focus arrests at the damaged site and halts c-di-AMP synthesis.</text>
</comment>
<comment type="catalytic activity">
    <reaction evidence="1">
        <text>2 ATP = 3',3'-c-di-AMP + 2 diphosphate</text>
        <dbReference type="Rhea" id="RHEA:35655"/>
        <dbReference type="ChEBI" id="CHEBI:30616"/>
        <dbReference type="ChEBI" id="CHEBI:33019"/>
        <dbReference type="ChEBI" id="CHEBI:71500"/>
        <dbReference type="EC" id="2.7.7.85"/>
    </reaction>
</comment>
<comment type="cofactor">
    <cofactor evidence="1">
        <name>Mg(2+)</name>
        <dbReference type="ChEBI" id="CHEBI:18420"/>
    </cofactor>
</comment>
<comment type="subunit">
    <text evidence="1">Homooctamer.</text>
</comment>
<comment type="similarity">
    <text evidence="1">Belongs to the DisA family.</text>
</comment>
<sequence>MEKEKKGARELDLLDIVQFVAPGTPLRAGIENVLRANTGGLIVVGYNDKVKSVVDGGFHINSAFSPAHLYELAKMDGAIILSDSGQKILYANTQLMPDATIHSSETGMRHRTAERVAKQTGCLIIAISERRNVITLYQGNRRYTLKDIGFILTKANQAIQTLEKYKTILDHAISALSALEFEELVTFGDVLSVLHRYEMVLRIKNEINMYIKELGTEGHLIRLQVNELITDMEQEAALFIKDYVKEKIKDPYVLLKQLQDMSSFELLDDSILYKLLGYPASTNIDEYVYTRGYRLLHKIPRLPMPIVENVVEAFGVLDRIMEADVQDLDEVEGIGEVRAKKIKKGLKRLQEKHYIDRQL</sequence>
<name>DISA_BACP2</name>
<evidence type="ECO:0000255" key="1">
    <source>
        <dbReference type="HAMAP-Rule" id="MF_01438"/>
    </source>
</evidence>
<evidence type="ECO:0000255" key="2">
    <source>
        <dbReference type="PROSITE-ProRule" id="PRU01130"/>
    </source>
</evidence>
<dbReference type="EC" id="2.7.7.85" evidence="1"/>
<dbReference type="EMBL" id="CP000813">
    <property type="protein sequence ID" value="ABV60773.1"/>
    <property type="molecule type" value="Genomic_DNA"/>
</dbReference>
<dbReference type="RefSeq" id="WP_012008686.1">
    <property type="nucleotide sequence ID" value="NZ_VEIS01000020.1"/>
</dbReference>
<dbReference type="SMR" id="A8F956"/>
<dbReference type="STRING" id="315750.BPUM_0073"/>
<dbReference type="GeneID" id="5619317"/>
<dbReference type="KEGG" id="bpu:BPUM_0073"/>
<dbReference type="eggNOG" id="COG1623">
    <property type="taxonomic scope" value="Bacteria"/>
</dbReference>
<dbReference type="HOGENOM" id="CLU_787128_0_0_9"/>
<dbReference type="OrthoDB" id="41841at2"/>
<dbReference type="Proteomes" id="UP000001355">
    <property type="component" value="Chromosome"/>
</dbReference>
<dbReference type="GO" id="GO:0004016">
    <property type="term" value="F:adenylate cyclase activity"/>
    <property type="evidence" value="ECO:0007669"/>
    <property type="project" value="TreeGrafter"/>
</dbReference>
<dbReference type="GO" id="GO:0005524">
    <property type="term" value="F:ATP binding"/>
    <property type="evidence" value="ECO:0007669"/>
    <property type="project" value="UniProtKB-UniRule"/>
</dbReference>
<dbReference type="GO" id="GO:0106408">
    <property type="term" value="F:diadenylate cyclase activity"/>
    <property type="evidence" value="ECO:0007669"/>
    <property type="project" value="UniProtKB-EC"/>
</dbReference>
<dbReference type="GO" id="GO:0003677">
    <property type="term" value="F:DNA binding"/>
    <property type="evidence" value="ECO:0007669"/>
    <property type="project" value="UniProtKB-UniRule"/>
</dbReference>
<dbReference type="GO" id="GO:0006281">
    <property type="term" value="P:DNA repair"/>
    <property type="evidence" value="ECO:0007669"/>
    <property type="project" value="UniProtKB-UniRule"/>
</dbReference>
<dbReference type="FunFam" id="3.40.1700.10:FF:000001">
    <property type="entry name" value="DNA integrity scanning protein DisA"/>
    <property type="match status" value="1"/>
</dbReference>
<dbReference type="Gene3D" id="1.10.150.20">
    <property type="entry name" value="5' to 3' exonuclease, C-terminal subdomain"/>
    <property type="match status" value="1"/>
</dbReference>
<dbReference type="Gene3D" id="1.20.1260.110">
    <property type="entry name" value="DNA integrity scanning linker region"/>
    <property type="match status" value="1"/>
</dbReference>
<dbReference type="Gene3D" id="3.40.1700.10">
    <property type="entry name" value="DNA integrity scanning protein, DisA, N-terminal domain"/>
    <property type="match status" value="1"/>
</dbReference>
<dbReference type="HAMAP" id="MF_01438">
    <property type="entry name" value="DisA"/>
    <property type="match status" value="1"/>
</dbReference>
<dbReference type="InterPro" id="IPR050338">
    <property type="entry name" value="DisA"/>
</dbReference>
<dbReference type="InterPro" id="IPR038331">
    <property type="entry name" value="DisA_sf"/>
</dbReference>
<dbReference type="InterPro" id="IPR036888">
    <property type="entry name" value="DNA_integrity_DisA_N_sf"/>
</dbReference>
<dbReference type="InterPro" id="IPR018906">
    <property type="entry name" value="DNA_integrity_scan_DisA_link"/>
</dbReference>
<dbReference type="InterPro" id="IPR003390">
    <property type="entry name" value="DNA_integrity_scan_DisA_N"/>
</dbReference>
<dbReference type="InterPro" id="IPR023763">
    <property type="entry name" value="DNA_integrity_scanning_protein"/>
</dbReference>
<dbReference type="InterPro" id="IPR010994">
    <property type="entry name" value="RuvA_2-like"/>
</dbReference>
<dbReference type="NCBIfam" id="NF010009">
    <property type="entry name" value="PRK13482.1"/>
    <property type="match status" value="1"/>
</dbReference>
<dbReference type="PANTHER" id="PTHR34185">
    <property type="entry name" value="DIADENYLATE CYCLASE"/>
    <property type="match status" value="1"/>
</dbReference>
<dbReference type="PANTHER" id="PTHR34185:SF3">
    <property type="entry name" value="DNA INTEGRITY SCANNING PROTEIN DISA"/>
    <property type="match status" value="1"/>
</dbReference>
<dbReference type="Pfam" id="PF02457">
    <property type="entry name" value="DAC"/>
    <property type="match status" value="1"/>
</dbReference>
<dbReference type="Pfam" id="PF10635">
    <property type="entry name" value="DisA-linker"/>
    <property type="match status" value="1"/>
</dbReference>
<dbReference type="SUPFAM" id="SSF47781">
    <property type="entry name" value="RuvA domain 2-like"/>
    <property type="match status" value="1"/>
</dbReference>
<dbReference type="SUPFAM" id="SSF143597">
    <property type="entry name" value="YojJ-like"/>
    <property type="match status" value="1"/>
</dbReference>
<dbReference type="PROSITE" id="PS51794">
    <property type="entry name" value="DAC"/>
    <property type="match status" value="1"/>
</dbReference>
<accession>A8F956</accession>
<organism>
    <name type="scientific">Bacillus pumilus (strain SAFR-032)</name>
    <dbReference type="NCBI Taxonomy" id="315750"/>
    <lineage>
        <taxon>Bacteria</taxon>
        <taxon>Bacillati</taxon>
        <taxon>Bacillota</taxon>
        <taxon>Bacilli</taxon>
        <taxon>Bacillales</taxon>
        <taxon>Bacillaceae</taxon>
        <taxon>Bacillus</taxon>
    </lineage>
</organism>
<gene>
    <name evidence="1" type="primary">disA</name>
    <name type="ordered locus">BPUM_0073</name>
</gene>
<feature type="chain" id="PRO_1000068536" description="DNA integrity scanning protein DisA">
    <location>
        <begin position="1"/>
        <end position="359"/>
    </location>
</feature>
<feature type="domain" description="DAC" evidence="2">
    <location>
        <begin position="10"/>
        <end position="148"/>
    </location>
</feature>
<feature type="binding site" evidence="1">
    <location>
        <position position="77"/>
    </location>
    <ligand>
        <name>ATP</name>
        <dbReference type="ChEBI" id="CHEBI:30616"/>
    </ligand>
</feature>
<feature type="binding site" evidence="1">
    <location>
        <position position="95"/>
    </location>
    <ligand>
        <name>ATP</name>
        <dbReference type="ChEBI" id="CHEBI:30616"/>
    </ligand>
</feature>
<feature type="binding site" evidence="1">
    <location>
        <begin position="108"/>
        <end position="112"/>
    </location>
    <ligand>
        <name>ATP</name>
        <dbReference type="ChEBI" id="CHEBI:30616"/>
    </ligand>
</feature>
<reference key="1">
    <citation type="journal article" date="2007" name="PLoS ONE">
        <title>Paradoxical DNA repair and peroxide resistance gene conservation in Bacillus pumilus SAFR-032.</title>
        <authorList>
            <person name="Gioia J."/>
            <person name="Yerrapragada S."/>
            <person name="Qin X."/>
            <person name="Jiang H."/>
            <person name="Igboeli O.C."/>
            <person name="Muzny D."/>
            <person name="Dugan-Rocha S."/>
            <person name="Ding Y."/>
            <person name="Hawes A."/>
            <person name="Liu W."/>
            <person name="Perez L."/>
            <person name="Kovar C."/>
            <person name="Dinh H."/>
            <person name="Lee S."/>
            <person name="Nazareth L."/>
            <person name="Blyth P."/>
            <person name="Holder M."/>
            <person name="Buhay C."/>
            <person name="Tirumalai M.R."/>
            <person name="Liu Y."/>
            <person name="Dasgupta I."/>
            <person name="Bokhetache L."/>
            <person name="Fujita M."/>
            <person name="Karouia F."/>
            <person name="Eswara Moorthy P."/>
            <person name="Siefert J."/>
            <person name="Uzman A."/>
            <person name="Buzumbo P."/>
            <person name="Verma A."/>
            <person name="Zwiya H."/>
            <person name="McWilliams B.D."/>
            <person name="Olowu A."/>
            <person name="Clinkenbeard K.D."/>
            <person name="Newcombe D."/>
            <person name="Golebiewski L."/>
            <person name="Petrosino J.F."/>
            <person name="Nicholson W.L."/>
            <person name="Fox G.E."/>
            <person name="Venkateswaran K."/>
            <person name="Highlander S.K."/>
            <person name="Weinstock G.M."/>
        </authorList>
    </citation>
    <scope>NUCLEOTIDE SEQUENCE [LARGE SCALE GENOMIC DNA]</scope>
    <source>
        <strain>SAFR-032</strain>
    </source>
</reference>
<proteinExistence type="inferred from homology"/>
<keyword id="KW-0067">ATP-binding</keyword>
<keyword id="KW-0227">DNA damage</keyword>
<keyword id="KW-0234">DNA repair</keyword>
<keyword id="KW-0238">DNA-binding</keyword>
<keyword id="KW-0460">Magnesium</keyword>
<keyword id="KW-0547">Nucleotide-binding</keyword>
<keyword id="KW-0548">Nucleotidyltransferase</keyword>
<keyword id="KW-0808">Transferase</keyword>
<protein>
    <recommendedName>
        <fullName evidence="1">DNA integrity scanning protein DisA</fullName>
    </recommendedName>
    <alternativeName>
        <fullName evidence="1">Cyclic di-AMP synthase</fullName>
        <shortName evidence="1">c-di-AMP synthase</shortName>
    </alternativeName>
    <alternativeName>
        <fullName evidence="1">Diadenylate cyclase</fullName>
        <ecNumber evidence="1">2.7.7.85</ecNumber>
    </alternativeName>
</protein>